<reference key="1">
    <citation type="submission" date="2006-03" db="EMBL/GenBank/DDBJ databases">
        <title>Complete sequence of Methylobacillus flagellatus KT.</title>
        <authorList>
            <consortium name="US DOE Joint Genome Institute"/>
            <person name="Copeland A."/>
            <person name="Lucas S."/>
            <person name="Lapidus A."/>
            <person name="Barry K."/>
            <person name="Detter J.C."/>
            <person name="Glavina del Rio T."/>
            <person name="Hammon N."/>
            <person name="Israni S."/>
            <person name="Dalin E."/>
            <person name="Tice H."/>
            <person name="Pitluck S."/>
            <person name="Brettin T."/>
            <person name="Bruce D."/>
            <person name="Han C."/>
            <person name="Tapia R."/>
            <person name="Saunders E."/>
            <person name="Gilna P."/>
            <person name="Schmutz J."/>
            <person name="Larimer F."/>
            <person name="Land M."/>
            <person name="Kyrpides N."/>
            <person name="Anderson I."/>
            <person name="Richardson P."/>
        </authorList>
    </citation>
    <scope>NUCLEOTIDE SEQUENCE [LARGE SCALE GENOMIC DNA]</scope>
    <source>
        <strain>ATCC 51484 / DSM 6875 / VKM B-1610 / KT</strain>
    </source>
</reference>
<feature type="chain" id="PRO_1000064733" description="Ribosome maturation factor RimP">
    <location>
        <begin position="1"/>
        <end position="144"/>
    </location>
</feature>
<gene>
    <name evidence="1" type="primary">rimP</name>
    <name type="ordered locus">Mfla_0065</name>
</gene>
<keyword id="KW-0963">Cytoplasm</keyword>
<keyword id="KW-1185">Reference proteome</keyword>
<keyword id="KW-0690">Ribosome biogenesis</keyword>
<comment type="function">
    <text evidence="1">Required for maturation of 30S ribosomal subunits.</text>
</comment>
<comment type="subcellular location">
    <subcellularLocation>
        <location evidence="1">Cytoplasm</location>
    </subcellularLocation>
</comment>
<comment type="similarity">
    <text evidence="1">Belongs to the RimP family.</text>
</comment>
<protein>
    <recommendedName>
        <fullName evidence="1">Ribosome maturation factor RimP</fullName>
    </recommendedName>
</protein>
<sequence length="144" mass="16400">MQDLNALLERSLGQLGYELVDMELANRGKLIRLFIDKPEGINIDDCVLVSNHLSNLLAVEHDIDYDRLEISSPGLDRVLKKTSDFVRFAGERAQVKLRMPIEGRKNFLGILRGVDQEYLVLECDGVEQRVPFSNIDKARLSPEF</sequence>
<name>RIMP_METFK</name>
<evidence type="ECO:0000255" key="1">
    <source>
        <dbReference type="HAMAP-Rule" id="MF_01077"/>
    </source>
</evidence>
<organism>
    <name type="scientific">Methylobacillus flagellatus (strain ATCC 51484 / DSM 6875 / VKM B-1610 / KT)</name>
    <dbReference type="NCBI Taxonomy" id="265072"/>
    <lineage>
        <taxon>Bacteria</taxon>
        <taxon>Pseudomonadati</taxon>
        <taxon>Pseudomonadota</taxon>
        <taxon>Betaproteobacteria</taxon>
        <taxon>Nitrosomonadales</taxon>
        <taxon>Methylophilaceae</taxon>
        <taxon>Methylobacillus</taxon>
    </lineage>
</organism>
<proteinExistence type="inferred from homology"/>
<accession>Q1GXD8</accession>
<dbReference type="EMBL" id="CP000284">
    <property type="protein sequence ID" value="ABE48336.1"/>
    <property type="molecule type" value="Genomic_DNA"/>
</dbReference>
<dbReference type="RefSeq" id="WP_011478433.1">
    <property type="nucleotide sequence ID" value="NC_007947.1"/>
</dbReference>
<dbReference type="SMR" id="Q1GXD8"/>
<dbReference type="STRING" id="265072.Mfla_0065"/>
<dbReference type="KEGG" id="mfa:Mfla_0065"/>
<dbReference type="eggNOG" id="COG0779">
    <property type="taxonomic scope" value="Bacteria"/>
</dbReference>
<dbReference type="HOGENOM" id="CLU_070525_1_0_4"/>
<dbReference type="OrthoDB" id="9805006at2"/>
<dbReference type="Proteomes" id="UP000002440">
    <property type="component" value="Chromosome"/>
</dbReference>
<dbReference type="GO" id="GO:0005829">
    <property type="term" value="C:cytosol"/>
    <property type="evidence" value="ECO:0007669"/>
    <property type="project" value="TreeGrafter"/>
</dbReference>
<dbReference type="GO" id="GO:0000028">
    <property type="term" value="P:ribosomal small subunit assembly"/>
    <property type="evidence" value="ECO:0007669"/>
    <property type="project" value="TreeGrafter"/>
</dbReference>
<dbReference type="GO" id="GO:0006412">
    <property type="term" value="P:translation"/>
    <property type="evidence" value="ECO:0007669"/>
    <property type="project" value="TreeGrafter"/>
</dbReference>
<dbReference type="CDD" id="cd01734">
    <property type="entry name" value="YlxS_C"/>
    <property type="match status" value="1"/>
</dbReference>
<dbReference type="Gene3D" id="2.30.30.180">
    <property type="entry name" value="Ribosome maturation factor RimP, C-terminal domain"/>
    <property type="match status" value="1"/>
</dbReference>
<dbReference type="Gene3D" id="3.30.300.70">
    <property type="entry name" value="RimP-like superfamily, N-terminal"/>
    <property type="match status" value="1"/>
</dbReference>
<dbReference type="HAMAP" id="MF_01077">
    <property type="entry name" value="RimP"/>
    <property type="match status" value="1"/>
</dbReference>
<dbReference type="InterPro" id="IPR003728">
    <property type="entry name" value="Ribosome_maturation_RimP"/>
</dbReference>
<dbReference type="InterPro" id="IPR028998">
    <property type="entry name" value="RimP_C"/>
</dbReference>
<dbReference type="InterPro" id="IPR036847">
    <property type="entry name" value="RimP_C_sf"/>
</dbReference>
<dbReference type="InterPro" id="IPR028989">
    <property type="entry name" value="RimP_N"/>
</dbReference>
<dbReference type="InterPro" id="IPR035956">
    <property type="entry name" value="RimP_N_sf"/>
</dbReference>
<dbReference type="NCBIfam" id="NF000929">
    <property type="entry name" value="PRK00092.2-1"/>
    <property type="match status" value="1"/>
</dbReference>
<dbReference type="PANTHER" id="PTHR33867">
    <property type="entry name" value="RIBOSOME MATURATION FACTOR RIMP"/>
    <property type="match status" value="1"/>
</dbReference>
<dbReference type="PANTHER" id="PTHR33867:SF1">
    <property type="entry name" value="RIBOSOME MATURATION FACTOR RIMP"/>
    <property type="match status" value="1"/>
</dbReference>
<dbReference type="Pfam" id="PF17384">
    <property type="entry name" value="DUF150_C"/>
    <property type="match status" value="1"/>
</dbReference>
<dbReference type="Pfam" id="PF02576">
    <property type="entry name" value="RimP_N"/>
    <property type="match status" value="1"/>
</dbReference>
<dbReference type="SUPFAM" id="SSF74942">
    <property type="entry name" value="YhbC-like, C-terminal domain"/>
    <property type="match status" value="1"/>
</dbReference>
<dbReference type="SUPFAM" id="SSF75420">
    <property type="entry name" value="YhbC-like, N-terminal domain"/>
    <property type="match status" value="1"/>
</dbReference>